<keyword id="KW-0025">Alternative splicing</keyword>
<keyword id="KW-1003">Cell membrane</keyword>
<keyword id="KW-0966">Cell projection</keyword>
<keyword id="KW-1015">Disulfide bond</keyword>
<keyword id="KW-0325">Glycoprotein</keyword>
<keyword id="KW-0407">Ion channel</keyword>
<keyword id="KW-0406">Ion transport</keyword>
<keyword id="KW-0472">Membrane</keyword>
<keyword id="KW-0479">Metal-binding</keyword>
<keyword id="KW-0597">Phosphoprotein</keyword>
<keyword id="KW-1185">Reference proteome</keyword>
<keyword id="KW-0677">Repeat</keyword>
<keyword id="KW-0915">Sodium</keyword>
<keyword id="KW-0894">Sodium channel</keyword>
<keyword id="KW-0739">Sodium transport</keyword>
<keyword id="KW-0812">Transmembrane</keyword>
<keyword id="KW-1133">Transmembrane helix</keyword>
<keyword id="KW-0813">Transport</keyword>
<keyword id="KW-0832">Ubl conjugation</keyword>
<keyword id="KW-0851">Voltage-gated channel</keyword>
<sequence>MAARLLAPPGPDSFKPFTPESLANIERRIAESKLKKPPKADGSHREDDEDSKPKPNSDLEAGKSLPFIYGDIPQGLVAVPLEDFDPYYLTQKTFVVLNRGKTLFRFSATPALYILSPFNLIRRIAIKILIHSVFSMIIMCTILTNCVFMTFSNPPEWSKNVEYTFTGIYTFESLVKIIARGFCIDGFTFLRDPWNWLDFSVIMMAYVTEFVDLGNVSALRTFRVLRALKTISVIPGLKTIVGALIQSVKKLSDVMILTVFCLSVFALIGLQLFMGNLRNKCVVWPINFNESYLENGTRGFDWEEYINNKTNFYMVPGMLEPLLCGNSSDAGQCPEGFQCMKAGRNPNYGYTSFDTFSWAFLALFRLMTQDYWENLYQLTLRAAGKTYMIFFVLVIFVGSFYLVNLILAVVAMAYEEQNQATLEEAEQKEAEFKAMLEQLKKQQEEAQAAAMATSAGTVSEDAIEEEGEDGVGSPRSSSELSKLSSKSAKERRNRRKKRKQKELSEGEEKGDPEKVFKSESEDGMRRKAFRLPDNRIGRKFSIMNQSLLSIPGSPFLSRHNSKSSIFSFRGPGRFRDPGSENEFADDEHSTVEESEGRRDSLFIPIRARERRSSYSGYSGYSQCSRSSRIFPSLRRSVKRNSTVDCNGVVSLIGPGSHIGRLLPEATTEVEIKKKGPGSLLVSMDQLASYGRKDRINSIMSVVTNTLVEELEESQRKCPPCWYKFANTFLIWECHPYWIKLKEIVNLIVMDPFVDLAITICIVLNTLFMAMEHHPMTPQFEHVLAVGNLVFTGIFTAEMFLKLIAMDPYYYFQEGWNIFDGFIVSLSLMELSLADVEGLSVLRSFRLLRVFKLAKSWPTLNMLIKIIGNSVGALGNLTLVLAIIVFIFAVVGMQLFGKSYKECVCKINQECKLPRWHMNDFFHSFLIVFRVLCGEWIETMWDCMEVAGQAMCLIVFMMVMVIGNLVVLNLFLALLLSSFSADNLAATDDDGEMNNLQISVIRIKKGVAWTKVKVHAFMQAHFKQREADEVKPLDELYEKKANCIANHTGVDIHRNGDFQKNGNGTTSGIGSSVEKYIIDEDHMSFINNPNLTVRVPIAVGESDFENLNTEDVSSESDPEGSKDKLDDTSSSEGSTIDIKPEVEEVPVEQPEEYLDPDACFTEGCVQRFKCCQVNIEEGLGKSWWILRKTCFLIVEHNWFETFIIFMILLSSGALAFEDIYIEQRKTIRTILEYADKVFTYIFILEMLLKWTAYGFVKFFTNAWCWLDFLIVAVSLVSLIANALGYSELGAIKSLRTLRALRPLRALSRFEGMRVVVNALVGAIPSIMNVLLVCLIFWLIFSIMGVNLFAGKYHYCFNETSEIRFEIDIVNNKTDCEKLMEGNSTEIRWKNVKINFDNVGAGYLALLQVATFKGWMDIMYAAVDSRKPDEQPDYEGNIYMYIYFVIFIIFGSFFTLNLFIGVIIDNFNQQKKKFGGQDIFMTEEQKKYYNAMKKLGSKKPQKPIPRPLNKIQGIVFDFVTQQAFDIVIMMLICLNMVTMMVETDTQSKQMENILYWINLVFVIFFTCECVLKMFALRHYYFTIGWNIFDFVVVILSIVGMFLADIIEKYFVSPTLFRVIRLARIGRILRLIKGAKGIRTLLFALMMSLPALFNIGLLLFLVMFIFSIFGMSNFAYVKHEAGIDDMFNFETFGNSMICLFQITTSAGWDGLLLPILNRPPDCSLDKEHPGSGFKGDCGNPSVGIFFFVSYIIISFLIVVNMYIAIILENFSVATEESADPLSEDDFETFYEIWEKFDPDATQFIEYCKLADFADALEHPLRVPKPNTIELIAMDLPMVSGDRIHCLDILFAFTKRVLGDSGELDILRQQMEERFVASNPSKVSYEPITTTLRRKQEEVSAVVLQRAYRGHLARRGFICRKMASNKLENGGTHRDKKESTPSTASLPSYDSVTKPDKEKQQRAEEGRRERAKRQKEVRESKC</sequence>
<name>SCN8A_RAT</name>
<protein>
    <recommendedName>
        <fullName>Sodium channel protein type 8 subunit alpha</fullName>
    </recommendedName>
    <alternativeName>
        <fullName>Peripheral nerve protein type 4</fullName>
        <shortName>PN4</shortName>
    </alternativeName>
    <alternativeName>
        <fullName>Sodium channel 6</fullName>
        <shortName>NaCh6</shortName>
    </alternativeName>
    <alternativeName>
        <fullName>Sodium channel protein type VIII subunit alpha</fullName>
    </alternativeName>
    <alternativeName>
        <fullName>Voltage-gated sodium channel subunit alpha Nav1.6</fullName>
    </alternativeName>
</protein>
<accession>O88420</accession>
<accession>O88421</accession>
<gene>
    <name evidence="16" type="primary">Scn8a</name>
</gene>
<feature type="chain" id="PRO_0000390890" description="Sodium channel protein type 8 subunit alpha">
    <location>
        <begin position="1"/>
        <end position="1978"/>
    </location>
</feature>
<feature type="topological domain" description="Cytoplasmic" evidence="14">
    <location>
        <begin position="1"/>
        <end position="132"/>
    </location>
</feature>
<feature type="transmembrane region" description="Helical; Name=S1 of repeat I" evidence="2">
    <location>
        <begin position="133"/>
        <end position="151"/>
    </location>
</feature>
<feature type="topological domain" description="Extracellular" evidence="14">
    <location>
        <begin position="152"/>
        <end position="158"/>
    </location>
</feature>
<feature type="transmembrane region" description="Helical; Name=S2 of repeat I" evidence="2">
    <location>
        <begin position="159"/>
        <end position="179"/>
    </location>
</feature>
<feature type="topological domain" description="Cytoplasmic" evidence="14">
    <location>
        <begin position="180"/>
        <end position="193"/>
    </location>
</feature>
<feature type="transmembrane region" description="Helical; Name=S3 of repeat I" evidence="2">
    <location>
        <begin position="194"/>
        <end position="211"/>
    </location>
</feature>
<feature type="topological domain" description="Extracellular" evidence="14">
    <location>
        <begin position="212"/>
        <end position="217"/>
    </location>
</feature>
<feature type="transmembrane region" description="Helical; Name=S4 of repeat I" evidence="2">
    <location>
        <begin position="218"/>
        <end position="234"/>
    </location>
</feature>
<feature type="topological domain" description="Cytoplasmic" evidence="14">
    <location>
        <begin position="235"/>
        <end position="253"/>
    </location>
</feature>
<feature type="transmembrane region" description="Helical; Name=S5 of repeat I" evidence="2">
    <location>
        <begin position="254"/>
        <end position="273"/>
    </location>
</feature>
<feature type="topological domain" description="Extracellular" evidence="14">
    <location>
        <begin position="274"/>
        <end position="355"/>
    </location>
</feature>
<feature type="intramembrane region" description="Pore-forming" evidence="2">
    <location>
        <begin position="356"/>
        <end position="380"/>
    </location>
</feature>
<feature type="topological domain" description="Extracellular" evidence="14">
    <location>
        <begin position="381"/>
        <end position="387"/>
    </location>
</feature>
<feature type="transmembrane region" description="Helical; Name=S6 of repeat I" evidence="2">
    <location>
        <begin position="388"/>
        <end position="408"/>
    </location>
</feature>
<feature type="topological domain" description="Cytoplasmic" evidence="14">
    <location>
        <begin position="409"/>
        <end position="751"/>
    </location>
</feature>
<feature type="transmembrane region" description="Helical; Name=S1 of repeat II" evidence="2">
    <location>
        <begin position="752"/>
        <end position="770"/>
    </location>
</feature>
<feature type="topological domain" description="Extracellular" evidence="14">
    <location>
        <begin position="771"/>
        <end position="781"/>
    </location>
</feature>
<feature type="transmembrane region" description="Helical; Name=S2 of repeat II" evidence="2">
    <location>
        <begin position="782"/>
        <end position="801"/>
    </location>
</feature>
<feature type="topological domain" description="Cytoplasmic" evidence="14">
    <location>
        <begin position="802"/>
        <end position="815"/>
    </location>
</feature>
<feature type="transmembrane region" description="Helical; Name=S3 of repeat II" evidence="2">
    <location>
        <begin position="816"/>
        <end position="835"/>
    </location>
</feature>
<feature type="topological domain" description="Extracellular" evidence="14">
    <location>
        <begin position="836"/>
        <end position="837"/>
    </location>
</feature>
<feature type="transmembrane region" description="Helical; Name=S4 of repeat II" evidence="2">
    <location>
        <begin position="838"/>
        <end position="855"/>
    </location>
</feature>
<feature type="topological domain" description="Cytoplasmic" evidence="14">
    <location>
        <begin position="856"/>
        <end position="871"/>
    </location>
</feature>
<feature type="transmembrane region" description="Helical; Name=S5 of repeat II" evidence="2">
    <location>
        <begin position="872"/>
        <end position="890"/>
    </location>
</feature>
<feature type="topological domain" description="Extracellular" evidence="14">
    <location>
        <begin position="891"/>
        <end position="919"/>
    </location>
</feature>
<feature type="intramembrane region" description="Pore-forming" evidence="2">
    <location>
        <begin position="920"/>
        <end position="940"/>
    </location>
</feature>
<feature type="topological domain" description="Extracellular" evidence="14">
    <location>
        <begin position="941"/>
        <end position="953"/>
    </location>
</feature>
<feature type="transmembrane region" description="Helical; Name=S6 of repeat II" evidence="2">
    <location>
        <begin position="954"/>
        <end position="974"/>
    </location>
</feature>
<feature type="topological domain" description="Cytoplasmic" evidence="14">
    <location>
        <begin position="975"/>
        <end position="1197"/>
    </location>
</feature>
<feature type="transmembrane region" description="Helical; Name=S1 of repeat III" evidence="2">
    <location>
        <begin position="1198"/>
        <end position="1215"/>
    </location>
</feature>
<feature type="topological domain" description="Extracellular" evidence="14">
    <location>
        <begin position="1216"/>
        <end position="1228"/>
    </location>
</feature>
<feature type="transmembrane region" description="Helical; Name=S2 of repeat III" evidence="2">
    <location>
        <begin position="1229"/>
        <end position="1247"/>
    </location>
</feature>
<feature type="topological domain" description="Cytoplasmic" evidence="14">
    <location>
        <begin position="1248"/>
        <end position="1261"/>
    </location>
</feature>
<feature type="transmembrane region" description="Helical; Name=S3 of repeat III" evidence="2">
    <location>
        <begin position="1262"/>
        <end position="1280"/>
    </location>
</feature>
<feature type="topological domain" description="Extracellular" evidence="14">
    <location>
        <begin position="1281"/>
        <end position="1288"/>
    </location>
</feature>
<feature type="transmembrane region" description="Helical; Name=S4 of repeat III" evidence="2">
    <location>
        <begin position="1289"/>
        <end position="1307"/>
    </location>
</feature>
<feature type="topological domain" description="Cytoplasmic" evidence="14">
    <location>
        <begin position="1308"/>
        <end position="1324"/>
    </location>
</feature>
<feature type="transmembrane region" description="Helical; Name=S5 of repeat III" evidence="2">
    <location>
        <begin position="1325"/>
        <end position="1344"/>
    </location>
</feature>
<feature type="topological domain" description="Extracellular" evidence="14">
    <location>
        <begin position="1345"/>
        <end position="1397"/>
    </location>
</feature>
<feature type="intramembrane region" description="Pore-forming" evidence="2">
    <location>
        <begin position="1398"/>
        <end position="1419"/>
    </location>
</feature>
<feature type="topological domain" description="Extracellular" evidence="14">
    <location>
        <begin position="1420"/>
        <end position="1436"/>
    </location>
</feature>
<feature type="transmembrane region" description="Helical; Name=S6 of repeat III" evidence="2">
    <location>
        <begin position="1437"/>
        <end position="1458"/>
    </location>
</feature>
<feature type="topological domain" description="Cytoplasmic" evidence="14">
    <location>
        <begin position="1459"/>
        <end position="1521"/>
    </location>
</feature>
<feature type="transmembrane region" description="Helical; Name=S1 of repeat IV" evidence="2">
    <location>
        <begin position="1522"/>
        <end position="1539"/>
    </location>
</feature>
<feature type="topological domain" description="Extracellular" evidence="14">
    <location>
        <begin position="1540"/>
        <end position="1550"/>
    </location>
</feature>
<feature type="transmembrane region" description="Helical; Name=S2 of repeat IV" evidence="2">
    <location>
        <begin position="1551"/>
        <end position="1569"/>
    </location>
</feature>
<feature type="topological domain" description="Cytoplasmic" evidence="14">
    <location>
        <begin position="1570"/>
        <end position="1581"/>
    </location>
</feature>
<feature type="transmembrane region" description="Helical; Name=S3 of repeat IV" evidence="2">
    <location>
        <begin position="1582"/>
        <end position="1599"/>
    </location>
</feature>
<feature type="topological domain" description="Extracellular" evidence="14">
    <location>
        <begin position="1600"/>
        <end position="1612"/>
    </location>
</feature>
<feature type="transmembrane region" description="Helical; Name=S4 of repeat IV" evidence="2">
    <location>
        <begin position="1613"/>
        <end position="1629"/>
    </location>
</feature>
<feature type="topological domain" description="Cytoplasmic" evidence="14">
    <location>
        <begin position="1630"/>
        <end position="1648"/>
    </location>
</feature>
<feature type="transmembrane region" description="Helical; Name=S5 of repeat IV" evidence="2">
    <location>
        <begin position="1649"/>
        <end position="1666"/>
    </location>
</feature>
<feature type="topological domain" description="Extracellular" evidence="14">
    <location>
        <begin position="1667"/>
        <end position="1688"/>
    </location>
</feature>
<feature type="intramembrane region" description="Pore-forming" evidence="2">
    <location>
        <begin position="1689"/>
        <end position="1711"/>
    </location>
</feature>
<feature type="topological domain" description="Extracellular" evidence="14">
    <location>
        <begin position="1712"/>
        <end position="1740"/>
    </location>
</feature>
<feature type="transmembrane region" description="Helical; Name=S6 of repeat IV" evidence="2">
    <location>
        <begin position="1741"/>
        <end position="1763"/>
    </location>
</feature>
<feature type="topological domain" description="Cytoplasmic" evidence="14">
    <location>
        <begin position="1764"/>
        <end position="1978"/>
    </location>
</feature>
<feature type="repeat" description="I" evidence="14">
    <location>
        <begin position="114"/>
        <end position="442"/>
    </location>
</feature>
<feature type="repeat" description="II" evidence="14">
    <location>
        <begin position="733"/>
        <end position="1005"/>
    </location>
</feature>
<feature type="repeat" description="III" evidence="14">
    <location>
        <begin position="1178"/>
        <end position="1493"/>
    </location>
</feature>
<feature type="repeat" description="IV" evidence="14">
    <location>
        <begin position="1502"/>
        <end position="1799"/>
    </location>
</feature>
<feature type="domain" description="IQ" evidence="8">
    <location>
        <begin position="1893"/>
        <end position="1922"/>
    </location>
</feature>
<feature type="region of interest" description="Disordered" evidence="9">
    <location>
        <begin position="1"/>
        <end position="20"/>
    </location>
</feature>
<feature type="region of interest" description="Disordered" evidence="9">
    <location>
        <begin position="28"/>
        <end position="62"/>
    </location>
</feature>
<feature type="region of interest" description="Disordered" evidence="9">
    <location>
        <begin position="446"/>
        <end position="530"/>
    </location>
</feature>
<feature type="region of interest" description="Disordered" evidence="9">
    <location>
        <begin position="576"/>
        <end position="597"/>
    </location>
</feature>
<feature type="region of interest" description="Disordered" evidence="9">
    <location>
        <begin position="1105"/>
        <end position="1146"/>
    </location>
</feature>
<feature type="region of interest" description="Disordered" evidence="9">
    <location>
        <begin position="1923"/>
        <end position="1978"/>
    </location>
</feature>
<feature type="compositionally biased region" description="Basic and acidic residues" evidence="9">
    <location>
        <begin position="28"/>
        <end position="61"/>
    </location>
</feature>
<feature type="compositionally biased region" description="Low complexity" evidence="9">
    <location>
        <begin position="473"/>
        <end position="486"/>
    </location>
</feature>
<feature type="compositionally biased region" description="Basic residues" evidence="9">
    <location>
        <begin position="489"/>
        <end position="500"/>
    </location>
</feature>
<feature type="compositionally biased region" description="Basic and acidic residues" evidence="9">
    <location>
        <begin position="501"/>
        <end position="530"/>
    </location>
</feature>
<feature type="compositionally biased region" description="Basic and acidic residues" evidence="9">
    <location>
        <begin position="586"/>
        <end position="597"/>
    </location>
</feature>
<feature type="compositionally biased region" description="Polar residues" evidence="9">
    <location>
        <begin position="1936"/>
        <end position="1947"/>
    </location>
</feature>
<feature type="compositionally biased region" description="Basic and acidic residues" evidence="9">
    <location>
        <begin position="1949"/>
        <end position="1978"/>
    </location>
</feature>
<feature type="binding site" evidence="5">
    <location>
        <position position="373"/>
    </location>
    <ligand>
        <name>Na(+)</name>
        <dbReference type="ChEBI" id="CHEBI:29101"/>
        <label>2</label>
    </ligand>
</feature>
<feature type="binding site" evidence="5">
    <location>
        <position position="934"/>
    </location>
    <ligand>
        <name>Na(+)</name>
        <dbReference type="ChEBI" id="CHEBI:29101"/>
        <label>1</label>
    </ligand>
</feature>
<feature type="binding site" evidence="5">
    <location>
        <position position="937"/>
    </location>
    <ligand>
        <name>Na(+)</name>
        <dbReference type="ChEBI" id="CHEBI:29101"/>
        <label>1</label>
    </ligand>
</feature>
<feature type="modified residue" description="Phosphoserine" evidence="17">
    <location>
        <position position="518"/>
    </location>
</feature>
<feature type="modified residue" description="Phosphoserine" evidence="17">
    <location>
        <position position="520"/>
    </location>
</feature>
<feature type="modified residue" description="Phosphoserine; by PKC" evidence="4">
    <location>
        <position position="1495"/>
    </location>
</feature>
<feature type="glycosylation site" description="N-linked (GlcNAc...) asparagine" evidence="7">
    <location>
        <position position="215"/>
    </location>
</feature>
<feature type="glycosylation site" description="N-linked (GlcNAc...) asparagine" evidence="7">
    <location>
        <position position="289"/>
    </location>
</feature>
<feature type="glycosylation site" description="N-linked (GlcNAc...) asparagine" evidence="7">
    <location>
        <position position="295"/>
    </location>
</feature>
<feature type="glycosylation site" description="N-linked (GlcNAc...) asparagine" evidence="7">
    <location>
        <position position="308"/>
    </location>
</feature>
<feature type="glycosylation site" description="N-linked (GlcNAc...) asparagine" evidence="7">
    <location>
        <position position="326"/>
    </location>
</feature>
<feature type="glycosylation site" description="N-linked (GlcNAc...) asparagine" evidence="7">
    <location>
        <position position="1356"/>
    </location>
</feature>
<feature type="glycosylation site" description="N-linked (GlcNAc...) asparagine" evidence="7">
    <location>
        <position position="1370"/>
    </location>
</feature>
<feature type="glycosylation site" description="N-linked (GlcNAc...) asparagine" evidence="7">
    <location>
        <position position="1381"/>
    </location>
</feature>
<feature type="disulfide bond" evidence="2">
    <location>
        <begin position="281"/>
        <end position="333"/>
    </location>
</feature>
<feature type="disulfide bond" description="Interchain; with SCN2B or SCN4B" evidence="3">
    <location>
        <position position="902"/>
    </location>
</feature>
<feature type="disulfide bond" description="Interchain; with the conotoxin GVIIJ (when the channel is not linked to SCN2B or SCN4B; the bond to SCN2B or SCN4B protects the channel from the inhibition by toxin)" evidence="3">
    <location>
        <position position="902"/>
    </location>
</feature>
<feature type="disulfide bond" evidence="5">
    <location>
        <begin position="904"/>
        <end position="910"/>
    </location>
</feature>
<feature type="disulfide bond" evidence="2">
    <location>
        <begin position="942"/>
        <end position="951"/>
    </location>
</feature>
<feature type="disulfide bond" evidence="5">
    <location>
        <begin position="1354"/>
        <end position="1374"/>
    </location>
</feature>
<feature type="disulfide bond" evidence="5">
    <location>
        <begin position="1719"/>
        <end position="1734"/>
    </location>
</feature>
<feature type="splice variant" id="VSP_038652" description="In isoform 2." evidence="13">
    <original>E</original>
    <variation>EVKIDKAATDS</variation>
    <location>
        <position position="664"/>
    </location>
</feature>
<dbReference type="EMBL" id="AF049239">
    <property type="protein sequence ID" value="AAC26014.1"/>
    <property type="molecule type" value="mRNA"/>
</dbReference>
<dbReference type="EMBL" id="AF049240">
    <property type="protein sequence ID" value="AAC26015.1"/>
    <property type="molecule type" value="mRNA"/>
</dbReference>
<dbReference type="RefSeq" id="NP_062139.2">
    <molecule id="O88420-1"/>
    <property type="nucleotide sequence ID" value="NM_019266.3"/>
</dbReference>
<dbReference type="RefSeq" id="XP_063119200.1">
    <molecule id="O88420-1"/>
    <property type="nucleotide sequence ID" value="XM_063263130.1"/>
</dbReference>
<dbReference type="RefSeq" id="XP_063119202.1">
    <molecule id="O88420-1"/>
    <property type="nucleotide sequence ID" value="XM_063263132.1"/>
</dbReference>
<dbReference type="BMRB" id="O88420"/>
<dbReference type="SMR" id="O88420"/>
<dbReference type="BioGRID" id="248327">
    <property type="interactions" value="2"/>
</dbReference>
<dbReference type="FunCoup" id="O88420">
    <property type="interactions" value="1167"/>
</dbReference>
<dbReference type="STRING" id="10116.ENSRNOP00000008160"/>
<dbReference type="BindingDB" id="O88420"/>
<dbReference type="ChEMBL" id="CHEMBL2752"/>
<dbReference type="GuidetoPHARMACOLOGY" id="583"/>
<dbReference type="CarbonylDB" id="O88420"/>
<dbReference type="GlyCosmos" id="O88420">
    <property type="glycosylation" value="8 sites, No reported glycans"/>
</dbReference>
<dbReference type="GlyGen" id="O88420">
    <property type="glycosylation" value="9 sites"/>
</dbReference>
<dbReference type="iPTMnet" id="O88420"/>
<dbReference type="PhosphoSitePlus" id="O88420"/>
<dbReference type="PaxDb" id="10116-ENSRNOP00000008160"/>
<dbReference type="ABCD" id="O88420">
    <property type="antibodies" value="1 sequenced antibody"/>
</dbReference>
<dbReference type="Ensembl" id="ENSRNOT00000080923.2">
    <molecule id="O88420-2"/>
    <property type="protein sequence ID" value="ENSRNOP00000075703.2"/>
    <property type="gene ID" value="ENSRNOG00000005309.8"/>
</dbReference>
<dbReference type="GeneID" id="29710"/>
<dbReference type="KEGG" id="rno:29710"/>
<dbReference type="UCSC" id="RGD:3638">
    <molecule id="O88420-1"/>
    <property type="organism name" value="rat"/>
</dbReference>
<dbReference type="AGR" id="RGD:3638"/>
<dbReference type="CTD" id="6334"/>
<dbReference type="RGD" id="3638">
    <property type="gene designation" value="Scn8a"/>
</dbReference>
<dbReference type="eggNOG" id="KOG2301">
    <property type="taxonomic scope" value="Eukaryota"/>
</dbReference>
<dbReference type="GeneTree" id="ENSGT00940000156263"/>
<dbReference type="InParanoid" id="O88420"/>
<dbReference type="OMA" id="DPFYHNQ"/>
<dbReference type="PhylomeDB" id="O88420"/>
<dbReference type="PRO" id="PR:O88420"/>
<dbReference type="Proteomes" id="UP000002494">
    <property type="component" value="Chromosome 7"/>
</dbReference>
<dbReference type="GO" id="GO:0030424">
    <property type="term" value="C:axon"/>
    <property type="evidence" value="ECO:0000314"/>
    <property type="project" value="ARUK-UCL"/>
</dbReference>
<dbReference type="GO" id="GO:0043194">
    <property type="term" value="C:axon initial segment"/>
    <property type="evidence" value="ECO:0000314"/>
    <property type="project" value="BHF-UCL"/>
</dbReference>
<dbReference type="GO" id="GO:0030425">
    <property type="term" value="C:dendrite"/>
    <property type="evidence" value="ECO:0000266"/>
    <property type="project" value="RGD"/>
</dbReference>
<dbReference type="GO" id="GO:0098978">
    <property type="term" value="C:glutamatergic synapse"/>
    <property type="evidence" value="ECO:0000314"/>
    <property type="project" value="SynGO"/>
</dbReference>
<dbReference type="GO" id="GO:0016020">
    <property type="term" value="C:membrane"/>
    <property type="evidence" value="ECO:0000266"/>
    <property type="project" value="RGD"/>
</dbReference>
<dbReference type="GO" id="GO:0043025">
    <property type="term" value="C:neuronal cell body"/>
    <property type="evidence" value="ECO:0000266"/>
    <property type="project" value="RGD"/>
</dbReference>
<dbReference type="GO" id="GO:0033268">
    <property type="term" value="C:node of Ranvier"/>
    <property type="evidence" value="ECO:0000314"/>
    <property type="project" value="BHF-UCL"/>
</dbReference>
<dbReference type="GO" id="GO:0098688">
    <property type="term" value="C:parallel fiber to Purkinje cell synapse"/>
    <property type="evidence" value="ECO:0000314"/>
    <property type="project" value="SynGO"/>
</dbReference>
<dbReference type="GO" id="GO:0005886">
    <property type="term" value="C:plasma membrane"/>
    <property type="evidence" value="ECO:0000266"/>
    <property type="project" value="RGD"/>
</dbReference>
<dbReference type="GO" id="GO:0098839">
    <property type="term" value="C:postsynaptic density membrane"/>
    <property type="evidence" value="ECO:0000314"/>
    <property type="project" value="SynGO"/>
</dbReference>
<dbReference type="GO" id="GO:0048787">
    <property type="term" value="C:presynaptic active zone membrane"/>
    <property type="evidence" value="ECO:0000314"/>
    <property type="project" value="SynGO"/>
</dbReference>
<dbReference type="GO" id="GO:0034706">
    <property type="term" value="C:sodium channel complex"/>
    <property type="evidence" value="ECO:0000266"/>
    <property type="project" value="RGD"/>
</dbReference>
<dbReference type="GO" id="GO:0001518">
    <property type="term" value="C:voltage-gated sodium channel complex"/>
    <property type="evidence" value="ECO:0000266"/>
    <property type="project" value="RGD"/>
</dbReference>
<dbReference type="GO" id="GO:0030018">
    <property type="term" value="C:Z disc"/>
    <property type="evidence" value="ECO:0000266"/>
    <property type="project" value="RGD"/>
</dbReference>
<dbReference type="GO" id="GO:0031402">
    <property type="term" value="F:sodium ion binding"/>
    <property type="evidence" value="ECO:0000266"/>
    <property type="project" value="RGD"/>
</dbReference>
<dbReference type="GO" id="GO:0005248">
    <property type="term" value="F:voltage-gated sodium channel activity"/>
    <property type="evidence" value="ECO:0000314"/>
    <property type="project" value="RGD"/>
</dbReference>
<dbReference type="GO" id="GO:0001508">
    <property type="term" value="P:action potential"/>
    <property type="evidence" value="ECO:0000266"/>
    <property type="project" value="RGD"/>
</dbReference>
<dbReference type="GO" id="GO:0007628">
    <property type="term" value="P:adult walking behavior"/>
    <property type="evidence" value="ECO:0000266"/>
    <property type="project" value="RGD"/>
</dbReference>
<dbReference type="GO" id="GO:0007626">
    <property type="term" value="P:locomotory behavior"/>
    <property type="evidence" value="ECO:0000266"/>
    <property type="project" value="RGD"/>
</dbReference>
<dbReference type="GO" id="GO:0086010">
    <property type="term" value="P:membrane depolarization during action potential"/>
    <property type="evidence" value="ECO:0000318"/>
    <property type="project" value="GO_Central"/>
</dbReference>
<dbReference type="GO" id="GO:0007517">
    <property type="term" value="P:muscle organ development"/>
    <property type="evidence" value="ECO:0000266"/>
    <property type="project" value="RGD"/>
</dbReference>
<dbReference type="GO" id="GO:0042552">
    <property type="term" value="P:myelination"/>
    <property type="evidence" value="ECO:0000270"/>
    <property type="project" value="BHF-UCL"/>
</dbReference>
<dbReference type="GO" id="GO:0021675">
    <property type="term" value="P:nerve development"/>
    <property type="evidence" value="ECO:0000266"/>
    <property type="project" value="RGD"/>
</dbReference>
<dbReference type="GO" id="GO:0019228">
    <property type="term" value="P:neuronal action potential"/>
    <property type="evidence" value="ECO:0000314"/>
    <property type="project" value="RGD"/>
</dbReference>
<dbReference type="GO" id="GO:0021554">
    <property type="term" value="P:optic nerve development"/>
    <property type="evidence" value="ECO:0000270"/>
    <property type="project" value="RGD"/>
</dbReference>
<dbReference type="GO" id="GO:0007422">
    <property type="term" value="P:peripheral nervous system development"/>
    <property type="evidence" value="ECO:0000270"/>
    <property type="project" value="BHF-UCL"/>
</dbReference>
<dbReference type="GO" id="GO:0009636">
    <property type="term" value="P:response to toxic substance"/>
    <property type="evidence" value="ECO:0000266"/>
    <property type="project" value="RGD"/>
</dbReference>
<dbReference type="GO" id="GO:0007605">
    <property type="term" value="P:sensory perception of sound"/>
    <property type="evidence" value="ECO:0000266"/>
    <property type="project" value="RGD"/>
</dbReference>
<dbReference type="GO" id="GO:0006814">
    <property type="term" value="P:sodium ion transport"/>
    <property type="evidence" value="ECO:0000314"/>
    <property type="project" value="RGD"/>
</dbReference>
<dbReference type="CDD" id="cd13433">
    <property type="entry name" value="Na_channel_gate"/>
    <property type="match status" value="1"/>
</dbReference>
<dbReference type="FunFam" id="1.10.238.10:FF:000002">
    <property type="entry name" value="Sodium channel protein"/>
    <property type="match status" value="1"/>
</dbReference>
<dbReference type="FunFam" id="1.10.287.70:FF:000001">
    <property type="entry name" value="Sodium channel protein"/>
    <property type="match status" value="1"/>
</dbReference>
<dbReference type="FunFam" id="1.10.287.70:FF:000006">
    <property type="entry name" value="Sodium channel protein"/>
    <property type="match status" value="1"/>
</dbReference>
<dbReference type="FunFam" id="1.20.120.350:FF:000002">
    <property type="entry name" value="Sodium channel protein"/>
    <property type="match status" value="1"/>
</dbReference>
<dbReference type="FunFam" id="1.20.120.350:FF:000004">
    <property type="entry name" value="Sodium channel protein"/>
    <property type="match status" value="1"/>
</dbReference>
<dbReference type="FunFam" id="1.20.120.350:FF:000005">
    <property type="entry name" value="Sodium channel protein"/>
    <property type="match status" value="1"/>
</dbReference>
<dbReference type="FunFam" id="1.20.5.1190:FF:000003">
    <property type="entry name" value="Sodium channel protein"/>
    <property type="match status" value="1"/>
</dbReference>
<dbReference type="FunFam" id="1.20.120.350:FF:000003">
    <property type="entry name" value="Voltage-dependent sodium channel"/>
    <property type="match status" value="1"/>
</dbReference>
<dbReference type="Gene3D" id="1.10.287.70">
    <property type="match status" value="4"/>
</dbReference>
<dbReference type="Gene3D" id="1.10.238.10">
    <property type="entry name" value="EF-hand"/>
    <property type="match status" value="1"/>
</dbReference>
<dbReference type="Gene3D" id="1.20.5.1190">
    <property type="entry name" value="iswi atpase"/>
    <property type="match status" value="1"/>
</dbReference>
<dbReference type="Gene3D" id="1.20.120.350">
    <property type="entry name" value="Voltage-gated potassium channels. Chain C"/>
    <property type="match status" value="4"/>
</dbReference>
<dbReference type="InterPro" id="IPR005821">
    <property type="entry name" value="Ion_trans_dom"/>
</dbReference>
<dbReference type="InterPro" id="IPR000048">
    <property type="entry name" value="IQ_motif_EF-hand-BS"/>
</dbReference>
<dbReference type="InterPro" id="IPR008054">
    <property type="entry name" value="Na_channel_a8su"/>
</dbReference>
<dbReference type="InterPro" id="IPR001696">
    <property type="entry name" value="Na_channel_asu"/>
</dbReference>
<dbReference type="InterPro" id="IPR044564">
    <property type="entry name" value="Na_chnl_inactivation_gate"/>
</dbReference>
<dbReference type="InterPro" id="IPR010526">
    <property type="entry name" value="Na_trans_assoc_dom"/>
</dbReference>
<dbReference type="InterPro" id="IPR024583">
    <property type="entry name" value="Na_trans_cytopl"/>
</dbReference>
<dbReference type="InterPro" id="IPR043203">
    <property type="entry name" value="VGCC_Ca_Na"/>
</dbReference>
<dbReference type="InterPro" id="IPR027359">
    <property type="entry name" value="Volt_channel_dom_sf"/>
</dbReference>
<dbReference type="PANTHER" id="PTHR10037:SF23">
    <property type="entry name" value="SODIUM CHANNEL PROTEIN TYPE 8 SUBUNIT ALPHA"/>
    <property type="match status" value="1"/>
</dbReference>
<dbReference type="PANTHER" id="PTHR10037">
    <property type="entry name" value="VOLTAGE-GATED CATION CHANNEL CALCIUM AND SODIUM"/>
    <property type="match status" value="1"/>
</dbReference>
<dbReference type="Pfam" id="PF00520">
    <property type="entry name" value="Ion_trans"/>
    <property type="match status" value="4"/>
</dbReference>
<dbReference type="Pfam" id="PF24609">
    <property type="entry name" value="IQ_SCN5A_C"/>
    <property type="match status" value="1"/>
</dbReference>
<dbReference type="Pfam" id="PF06512">
    <property type="entry name" value="Na_trans_assoc"/>
    <property type="match status" value="1"/>
</dbReference>
<dbReference type="Pfam" id="PF11933">
    <property type="entry name" value="Na_trans_cytopl"/>
    <property type="match status" value="1"/>
</dbReference>
<dbReference type="PRINTS" id="PR00170">
    <property type="entry name" value="NACHANNEL"/>
</dbReference>
<dbReference type="PRINTS" id="PR01667">
    <property type="entry name" value="NACHANNEL8"/>
</dbReference>
<dbReference type="SMART" id="SM00015">
    <property type="entry name" value="IQ"/>
    <property type="match status" value="1"/>
</dbReference>
<dbReference type="SUPFAM" id="SSF81324">
    <property type="entry name" value="Voltage-gated potassium channels"/>
    <property type="match status" value="4"/>
</dbReference>
<dbReference type="PROSITE" id="PS50096">
    <property type="entry name" value="IQ"/>
    <property type="match status" value="1"/>
</dbReference>
<organism>
    <name type="scientific">Rattus norvegicus</name>
    <name type="common">Rat</name>
    <dbReference type="NCBI Taxonomy" id="10116"/>
    <lineage>
        <taxon>Eukaryota</taxon>
        <taxon>Metazoa</taxon>
        <taxon>Chordata</taxon>
        <taxon>Craniata</taxon>
        <taxon>Vertebrata</taxon>
        <taxon>Euteleostomi</taxon>
        <taxon>Mammalia</taxon>
        <taxon>Eutheria</taxon>
        <taxon>Euarchontoglires</taxon>
        <taxon>Glires</taxon>
        <taxon>Rodentia</taxon>
        <taxon>Myomorpha</taxon>
        <taxon>Muroidea</taxon>
        <taxon>Muridae</taxon>
        <taxon>Murinae</taxon>
        <taxon>Rattus</taxon>
    </lineage>
</organism>
<reference key="1">
    <citation type="journal article" date="1998" name="J. Neurochem.">
        <title>Functional analysis of a voltage-gated sodium channel and its splice variant from rat dorsal root ganglia.</title>
        <authorList>
            <person name="Dietrich P.S."/>
            <person name="McGivern J.G."/>
            <person name="Delgado S.G."/>
            <person name="Koch B.D."/>
            <person name="Eglen R.M."/>
            <person name="Hunter J.C."/>
            <person name="Sangameswaran L."/>
        </authorList>
    </citation>
    <scope>NUCLEOTIDE SEQUENCE [MRNA] (ISOFORMS 1 AND 2)</scope>
    <scope>FUNCTION</scope>
    <scope>TRANSPORTER ACTIVITY</scope>
    <scope>SUBCELLULAR LOCATION</scope>
    <scope>TISSUE SPECIFICITY</scope>
    <source>
        <tissue>Spinal ganglion</tissue>
    </source>
</reference>
<reference key="2">
    <citation type="journal article" date="2004" name="J. Neurosci.">
        <title>Fibroblast growth factor homologous factor 2B: association with Nav1.6 and selective colocalization at nodes of Ranvier of dorsal root axons.</title>
        <authorList>
            <person name="Wittmack E.K."/>
            <person name="Rush A.M."/>
            <person name="Craner M.J."/>
            <person name="Goldfarb M."/>
            <person name="Waxman S.G."/>
            <person name="Dib-Hajj S.D."/>
        </authorList>
    </citation>
    <scope>INTERACTION WITH FGF13</scope>
</reference>
<reference key="3">
    <citation type="journal article" date="2012" name="Nat. Commun.">
        <title>Quantitative maps of protein phosphorylation sites across 14 different rat organs and tissues.</title>
        <authorList>
            <person name="Lundby A."/>
            <person name="Secher A."/>
            <person name="Lage K."/>
            <person name="Nordsborg N.B."/>
            <person name="Dmytriyev A."/>
            <person name="Lundby C."/>
            <person name="Olsen J.V."/>
        </authorList>
    </citation>
    <scope>PHOSPHORYLATION [LARGE SCALE ANALYSIS] AT SER-518 AND SER-520</scope>
    <scope>IDENTIFICATION BY MASS SPECTROMETRY [LARGE SCALE ANALYSIS]</scope>
</reference>
<reference key="4">
    <citation type="journal article" date="2014" name="Proc. Natl. Acad. Sci. U.S.A.">
        <title>A disulfide tether stabilizes the block of sodium channels by the conotoxin muO[section sign]-GVIIJ.</title>
        <authorList>
            <person name="Gajewiak J."/>
            <person name="Azam L."/>
            <person name="Imperial J."/>
            <person name="Walewska A."/>
            <person name="Green B.R."/>
            <person name="Bandyopadhyay P.K."/>
            <person name="Raghuraman S."/>
            <person name="Ueberheide B."/>
            <person name="Bern M."/>
            <person name="Zhou H.M."/>
            <person name="Minassian N.A."/>
            <person name="Hagan R.H."/>
            <person name="Flinspach M."/>
            <person name="Liu Y."/>
            <person name="Bulaj G."/>
            <person name="Wickenden A.D."/>
            <person name="Olivera B.M."/>
            <person name="Yoshikami D."/>
            <person name="Zhang M.M."/>
        </authorList>
    </citation>
    <scope>INTERACTION WITH THE CONOTOXIN GVIIJ</scope>
</reference>
<evidence type="ECO:0000250" key="1"/>
<evidence type="ECO:0000250" key="2">
    <source>
        <dbReference type="UniProtKB" id="D0E0C2"/>
    </source>
</evidence>
<evidence type="ECO:0000250" key="3">
    <source>
        <dbReference type="UniProtKB" id="P04775"/>
    </source>
</evidence>
<evidence type="ECO:0000250" key="4">
    <source>
        <dbReference type="UniProtKB" id="Q15858"/>
    </source>
</evidence>
<evidence type="ECO:0000250" key="5">
    <source>
        <dbReference type="UniProtKB" id="Q9UQD0"/>
    </source>
</evidence>
<evidence type="ECO:0000250" key="6">
    <source>
        <dbReference type="UniProtKB" id="Q9WTU3"/>
    </source>
</evidence>
<evidence type="ECO:0000255" key="7"/>
<evidence type="ECO:0000255" key="8">
    <source>
        <dbReference type="PROSITE-ProRule" id="PRU00116"/>
    </source>
</evidence>
<evidence type="ECO:0000256" key="9">
    <source>
        <dbReference type="SAM" id="MobiDB-lite"/>
    </source>
</evidence>
<evidence type="ECO:0000269" key="10">
    <source>
    </source>
</evidence>
<evidence type="ECO:0000269" key="11">
    <source>
    </source>
</evidence>
<evidence type="ECO:0000269" key="12">
    <source>
    </source>
</evidence>
<evidence type="ECO:0000303" key="13">
    <source>
    </source>
</evidence>
<evidence type="ECO:0000305" key="14"/>
<evidence type="ECO:0000305" key="15">
    <source>
    </source>
</evidence>
<evidence type="ECO:0000312" key="16">
    <source>
        <dbReference type="RGD" id="3638"/>
    </source>
</evidence>
<evidence type="ECO:0007744" key="17">
    <source>
    </source>
</evidence>
<comment type="function">
    <text evidence="12">Pore-forming subunit of a voltage-gated sodium channel complex assuming opened or closed conformations in response to the voltage difference across membranes and through which sodium ions selectively pass along their electrochemical gradient. Contributes to neuronal excitability by regulating action potential threshold and propagation.</text>
</comment>
<comment type="catalytic activity">
    <reaction evidence="15">
        <text>Na(+)(in) = Na(+)(out)</text>
        <dbReference type="Rhea" id="RHEA:34963"/>
        <dbReference type="ChEBI" id="CHEBI:29101"/>
    </reaction>
</comment>
<comment type="subunit">
    <text evidence="5 6 10 11">The voltage-sensitive sodium channel consists of an ion-conducting pore-forming alpha subunit regulated by one or more beta-1 (SCN1B), beta-2 (SCN2B), beta-3 (SCN3B) and/or beta-4 (SCN4B) subunits. Beta-1 (SCN1B) and beta-3 (SCN3B) are non-covalently associated with alpha, while beta-2 (SCN2B) and beta-4 (SCN4B) are covalently linked by disulfide bonds. Interacts with NEDD4 and NEDD4L (By similarity). Interacts with FGF13 (PubMed:15282281). Interacts with FGF14, GBG3, GBB2 and SCN1B (By similarity). Interacts with TMEM233 (By similarity). Interacts with the conotoxin GVIIJ (PubMed:24497506). Interacts with CALM1; the interaction modulates the inactivation rate of SCN8A (By similarity).</text>
</comment>
<comment type="subcellular location">
    <subcellularLocation>
        <location evidence="12">Cell membrane</location>
        <topology evidence="5">Multi-pass membrane protein</topology>
    </subcellularLocation>
    <subcellularLocation>
        <location evidence="6">Cell projection</location>
        <location evidence="6">Axon</location>
    </subcellularLocation>
    <text evidence="6">Mainly localizes to the axon initial segment.</text>
</comment>
<comment type="alternative products">
    <event type="alternative splicing"/>
    <isoform>
        <id>O88420-1</id>
        <name>1</name>
        <name>PN4</name>
        <sequence type="displayed"/>
    </isoform>
    <isoform>
        <id>O88420-2</id>
        <name>2</name>
        <name>PN4a</name>
        <sequence type="described" ref="VSP_038652"/>
    </isoform>
</comment>
<comment type="tissue specificity">
    <text evidence="12">Isoform 1 is highly expressed in brain, moderately in spinal cord, and at low levels in dorsal root ganglia, nodose ganglia and superior cervical ganglia. Not detected in sciatic nerve and non-neuronal tissues. Isoform 2 is hardly detectable, if at all, in brain, expressed at low levels in spinal cord and at highest levels in dorsal root ganglia.</text>
</comment>
<comment type="domain">
    <text evidence="14">The sequence contains 4 internal repeats, each with 5 hydrophobic segments (S1, S2, S3, S5, S6) and one positively charged segment (S4). Segments S4 are probably the voltage-sensors and are characterized by a series of positively charged amino acids at every third position.</text>
</comment>
<comment type="PTM">
    <text evidence="6">May be ubiquitinated by NEDD4L; which would promote its endocytosis.</text>
</comment>
<comment type="PTM">
    <text evidence="1">Phosphorylation at Ser-1495 by PKC in a highly conserved cytoplasmic loop slows inactivation of the sodium channel and reduces peak sodium currents.</text>
</comment>
<comment type="miscellaneous">
    <molecule>Isoform 2</molecule>
    <text evidence="14">May be due to competing donor splice site.</text>
</comment>
<comment type="similarity">
    <text evidence="14">Belongs to the sodium channel (TC 1.A.1.10) family. Nav1.6/SCN8A subfamily.</text>
</comment>
<proteinExistence type="evidence at protein level"/>